<dbReference type="EC" id="3.1.13.1" evidence="5 9 10"/>
<dbReference type="EMBL" id="AY310909">
    <property type="protein sequence ID" value="AAQ21219.1"/>
    <property type="molecule type" value="mRNA"/>
</dbReference>
<dbReference type="EMBL" id="AK291062">
    <property type="protein sequence ID" value="BAF83751.1"/>
    <property type="molecule type" value="mRNA"/>
</dbReference>
<dbReference type="EMBL" id="AL137679">
    <property type="protein sequence ID" value="CAB70871.2"/>
    <property type="status" value="ALT_SEQ"/>
    <property type="molecule type" value="mRNA"/>
</dbReference>
<dbReference type="EMBL" id="BC035279">
    <property type="protein sequence ID" value="AAH35279.1"/>
    <property type="molecule type" value="mRNA"/>
</dbReference>
<dbReference type="CCDS" id="CCDS5972.1"/>
<dbReference type="PIR" id="T46432">
    <property type="entry name" value="T46432"/>
</dbReference>
<dbReference type="RefSeq" id="NP_699163.2">
    <property type="nucleotide sequence ID" value="NM_153332.3"/>
</dbReference>
<dbReference type="PDB" id="1W0H">
    <property type="method" value="X-ray"/>
    <property type="resolution" value="1.59 A"/>
    <property type="chains" value="A=123-322"/>
</dbReference>
<dbReference type="PDB" id="1ZBH">
    <property type="method" value="X-ray"/>
    <property type="resolution" value="3.00 A"/>
    <property type="chains" value="A/B/C/D=51-349"/>
</dbReference>
<dbReference type="PDB" id="1ZBU">
    <property type="method" value="X-ray"/>
    <property type="resolution" value="3.00 A"/>
    <property type="chains" value="A/B/C/D=1-349"/>
</dbReference>
<dbReference type="PDB" id="4L8R">
    <property type="method" value="X-ray"/>
    <property type="resolution" value="2.60 A"/>
    <property type="chains" value="B/E=55-349"/>
</dbReference>
<dbReference type="PDB" id="4QOZ">
    <property type="method" value="X-ray"/>
    <property type="resolution" value="2.30 A"/>
    <property type="chains" value="B/E=55-349"/>
</dbReference>
<dbReference type="PDBsum" id="1W0H"/>
<dbReference type="PDBsum" id="1ZBH"/>
<dbReference type="PDBsum" id="1ZBU"/>
<dbReference type="PDBsum" id="4L8R"/>
<dbReference type="PDBsum" id="4QOZ"/>
<dbReference type="SMR" id="Q8IV48"/>
<dbReference type="BioGRID" id="124718">
    <property type="interactions" value="58"/>
</dbReference>
<dbReference type="DIP" id="DIP-61409N"/>
<dbReference type="FunCoup" id="Q8IV48">
    <property type="interactions" value="3193"/>
</dbReference>
<dbReference type="IntAct" id="Q8IV48">
    <property type="interactions" value="26"/>
</dbReference>
<dbReference type="MINT" id="Q8IV48"/>
<dbReference type="STRING" id="9606.ENSP00000250263"/>
<dbReference type="iPTMnet" id="Q8IV48"/>
<dbReference type="PhosphoSitePlus" id="Q8IV48"/>
<dbReference type="BioMuta" id="ERI1"/>
<dbReference type="DMDM" id="45476938"/>
<dbReference type="jPOST" id="Q8IV48"/>
<dbReference type="MassIVE" id="Q8IV48"/>
<dbReference type="PaxDb" id="9606-ENSP00000429615"/>
<dbReference type="PeptideAtlas" id="Q8IV48"/>
<dbReference type="ProteomicsDB" id="70659"/>
<dbReference type="Pumba" id="Q8IV48"/>
<dbReference type="Antibodypedia" id="8346">
    <property type="antibodies" value="292 antibodies from 31 providers"/>
</dbReference>
<dbReference type="DNASU" id="90459"/>
<dbReference type="Ensembl" id="ENST00000250263.8">
    <property type="protein sequence ID" value="ENSP00000250263.7"/>
    <property type="gene ID" value="ENSG00000104626.15"/>
</dbReference>
<dbReference type="Ensembl" id="ENST00000519292.5">
    <property type="protein sequence ID" value="ENSP00000430190.1"/>
    <property type="gene ID" value="ENSG00000104626.15"/>
</dbReference>
<dbReference type="GeneID" id="90459"/>
<dbReference type="KEGG" id="hsa:90459"/>
<dbReference type="MANE-Select" id="ENST00000250263.8">
    <property type="protein sequence ID" value="ENSP00000250263.7"/>
    <property type="RefSeq nucleotide sequence ID" value="NM_153332.4"/>
    <property type="RefSeq protein sequence ID" value="NP_699163.2"/>
</dbReference>
<dbReference type="UCSC" id="uc003wsk.2">
    <property type="organism name" value="human"/>
</dbReference>
<dbReference type="AGR" id="HGNC:23994"/>
<dbReference type="CTD" id="90459"/>
<dbReference type="DisGeNET" id="90459"/>
<dbReference type="GeneCards" id="ERI1"/>
<dbReference type="HGNC" id="HGNC:23994">
    <property type="gene designation" value="ERI1"/>
</dbReference>
<dbReference type="HPA" id="ENSG00000104626">
    <property type="expression patterns" value="Low tissue specificity"/>
</dbReference>
<dbReference type="MalaCards" id="ERI1"/>
<dbReference type="MIM" id="608739">
    <property type="type" value="gene"/>
</dbReference>
<dbReference type="MIM" id="620662">
    <property type="type" value="phenotype"/>
</dbReference>
<dbReference type="MIM" id="620663">
    <property type="type" value="phenotype"/>
</dbReference>
<dbReference type="neXtProt" id="NX_Q8IV48"/>
<dbReference type="OpenTargets" id="ENSG00000104626"/>
<dbReference type="PharmGKB" id="PA164719226"/>
<dbReference type="VEuPathDB" id="HostDB:ENSG00000104626"/>
<dbReference type="eggNOG" id="KOG0542">
    <property type="taxonomic scope" value="Eukaryota"/>
</dbReference>
<dbReference type="GeneTree" id="ENSGT00530000063205"/>
<dbReference type="HOGENOM" id="CLU_037266_4_1_1"/>
<dbReference type="InParanoid" id="Q8IV48"/>
<dbReference type="OMA" id="MHSGQLM"/>
<dbReference type="OrthoDB" id="448399at2759"/>
<dbReference type="PAN-GO" id="Q8IV48">
    <property type="GO annotations" value="4 GO annotations based on evolutionary models"/>
</dbReference>
<dbReference type="PhylomeDB" id="Q8IV48"/>
<dbReference type="TreeFam" id="TF313449"/>
<dbReference type="PathwayCommons" id="Q8IV48"/>
<dbReference type="Reactome" id="R-HSA-6791226">
    <property type="pathway name" value="Major pathway of rRNA processing in the nucleolus and cytosol"/>
</dbReference>
<dbReference type="SignaLink" id="Q8IV48"/>
<dbReference type="BioGRID-ORCS" id="90459">
    <property type="hits" value="35 hits in 1168 CRISPR screens"/>
</dbReference>
<dbReference type="CD-CODE" id="91857CE7">
    <property type="entry name" value="Nucleolus"/>
</dbReference>
<dbReference type="ChiTaRS" id="ERI1">
    <property type="organism name" value="human"/>
</dbReference>
<dbReference type="EvolutionaryTrace" id="Q8IV48"/>
<dbReference type="GenomeRNAi" id="90459"/>
<dbReference type="Pharos" id="Q8IV48">
    <property type="development level" value="Tbio"/>
</dbReference>
<dbReference type="PRO" id="PR:Q8IV48"/>
<dbReference type="Proteomes" id="UP000005640">
    <property type="component" value="Chromosome 8"/>
</dbReference>
<dbReference type="RNAct" id="Q8IV48">
    <property type="molecule type" value="protein"/>
</dbReference>
<dbReference type="Bgee" id="ENSG00000104626">
    <property type="expression patterns" value="Expressed in secondary oocyte and 143 other cell types or tissues"/>
</dbReference>
<dbReference type="ExpressionAtlas" id="Q8IV48">
    <property type="expression patterns" value="baseline and differential"/>
</dbReference>
<dbReference type="GO" id="GO:0005737">
    <property type="term" value="C:cytoplasm"/>
    <property type="evidence" value="ECO:0000314"/>
    <property type="project" value="UniProtKB"/>
</dbReference>
<dbReference type="GO" id="GO:0071204">
    <property type="term" value="C:histone pre-mRNA 3'end processing complex"/>
    <property type="evidence" value="ECO:0000250"/>
    <property type="project" value="UniProtKB"/>
</dbReference>
<dbReference type="GO" id="GO:0005730">
    <property type="term" value="C:nucleolus"/>
    <property type="evidence" value="ECO:0000314"/>
    <property type="project" value="UniProtKB"/>
</dbReference>
<dbReference type="GO" id="GO:0005634">
    <property type="term" value="C:nucleus"/>
    <property type="evidence" value="ECO:0000250"/>
    <property type="project" value="UniProtKB"/>
</dbReference>
<dbReference type="GO" id="GO:0008408">
    <property type="term" value="F:3'-5' exonuclease activity"/>
    <property type="evidence" value="ECO:0000314"/>
    <property type="project" value="UniProtKB"/>
</dbReference>
<dbReference type="GO" id="GO:0000175">
    <property type="term" value="F:3'-5'-RNA exonuclease activity"/>
    <property type="evidence" value="ECO:0000318"/>
    <property type="project" value="GO_Central"/>
</dbReference>
<dbReference type="GO" id="GO:0071207">
    <property type="term" value="F:histone pre-mRNA stem-loop binding"/>
    <property type="evidence" value="ECO:0000250"/>
    <property type="project" value="UniProtKB"/>
</dbReference>
<dbReference type="GO" id="GO:0046872">
    <property type="term" value="F:metal ion binding"/>
    <property type="evidence" value="ECO:0007669"/>
    <property type="project" value="UniProtKB-KW"/>
</dbReference>
<dbReference type="GO" id="GO:0043022">
    <property type="term" value="F:ribosome binding"/>
    <property type="evidence" value="ECO:0000250"/>
    <property type="project" value="UniProtKB"/>
</dbReference>
<dbReference type="GO" id="GO:0019843">
    <property type="term" value="F:rRNA binding"/>
    <property type="evidence" value="ECO:0000250"/>
    <property type="project" value="UniProtKB"/>
</dbReference>
<dbReference type="GO" id="GO:0000467">
    <property type="term" value="P:exonucleolytic trimming to generate mature 3'-end of 5.8S rRNA from tricistronic rRNA transcript (SSU-rRNA, 5.8S rRNA, LSU-rRNA)"/>
    <property type="evidence" value="ECO:0000318"/>
    <property type="project" value="GO_Central"/>
</dbReference>
<dbReference type="GO" id="GO:0000460">
    <property type="term" value="P:maturation of 5.8S rRNA"/>
    <property type="evidence" value="ECO:0000315"/>
    <property type="project" value="UniProtKB"/>
</dbReference>
<dbReference type="GO" id="GO:0031047">
    <property type="term" value="P:regulatory ncRNA-mediated gene silencing"/>
    <property type="evidence" value="ECO:0007669"/>
    <property type="project" value="UniProtKB-KW"/>
</dbReference>
<dbReference type="GO" id="GO:0031125">
    <property type="term" value="P:rRNA 3'-end processing"/>
    <property type="evidence" value="ECO:0000250"/>
    <property type="project" value="UniProtKB"/>
</dbReference>
<dbReference type="CDD" id="cd06133">
    <property type="entry name" value="ERI-1_3'hExo_like"/>
    <property type="match status" value="1"/>
</dbReference>
<dbReference type="FunFam" id="1.10.720.30:FF:000015">
    <property type="entry name" value="3'-5' exoribonuclease 1"/>
    <property type="match status" value="1"/>
</dbReference>
<dbReference type="FunFam" id="3.30.420.10:FF:000034">
    <property type="entry name" value="3'-5' exoribonuclease 1"/>
    <property type="match status" value="1"/>
</dbReference>
<dbReference type="Gene3D" id="3.30.420.10">
    <property type="entry name" value="Ribonuclease H-like superfamily/Ribonuclease H"/>
    <property type="match status" value="1"/>
</dbReference>
<dbReference type="Gene3D" id="1.10.720.30">
    <property type="entry name" value="SAP domain"/>
    <property type="match status" value="1"/>
</dbReference>
<dbReference type="InterPro" id="IPR051274">
    <property type="entry name" value="3-5_Exoribonuclease"/>
</dbReference>
<dbReference type="InterPro" id="IPR047201">
    <property type="entry name" value="ERI-1_3'hExo-like"/>
</dbReference>
<dbReference type="InterPro" id="IPR013520">
    <property type="entry name" value="Exonuclease_RNaseT/DNA_pol3"/>
</dbReference>
<dbReference type="InterPro" id="IPR012337">
    <property type="entry name" value="RNaseH-like_sf"/>
</dbReference>
<dbReference type="InterPro" id="IPR036397">
    <property type="entry name" value="RNaseH_sf"/>
</dbReference>
<dbReference type="InterPro" id="IPR003034">
    <property type="entry name" value="SAP_dom"/>
</dbReference>
<dbReference type="InterPro" id="IPR036361">
    <property type="entry name" value="SAP_dom_sf"/>
</dbReference>
<dbReference type="PANTHER" id="PTHR23044">
    <property type="entry name" value="3'-5' EXONUCLEASE ERI1-RELATED"/>
    <property type="match status" value="1"/>
</dbReference>
<dbReference type="PANTHER" id="PTHR23044:SF61">
    <property type="entry name" value="3'-5' EXORIBONUCLEASE 1-RELATED"/>
    <property type="match status" value="1"/>
</dbReference>
<dbReference type="Pfam" id="PF00929">
    <property type="entry name" value="RNase_T"/>
    <property type="match status" value="1"/>
</dbReference>
<dbReference type="Pfam" id="PF02037">
    <property type="entry name" value="SAP"/>
    <property type="match status" value="1"/>
</dbReference>
<dbReference type="SMART" id="SM00479">
    <property type="entry name" value="EXOIII"/>
    <property type="match status" value="1"/>
</dbReference>
<dbReference type="SMART" id="SM00513">
    <property type="entry name" value="SAP"/>
    <property type="match status" value="1"/>
</dbReference>
<dbReference type="SUPFAM" id="SSF53098">
    <property type="entry name" value="Ribonuclease H-like"/>
    <property type="match status" value="1"/>
</dbReference>
<dbReference type="SUPFAM" id="SSF68906">
    <property type="entry name" value="SAP domain"/>
    <property type="match status" value="1"/>
</dbReference>
<dbReference type="PROSITE" id="PS50800">
    <property type="entry name" value="SAP"/>
    <property type="match status" value="1"/>
</dbReference>
<keyword id="KW-0002">3D-structure</keyword>
<keyword id="KW-0963">Cytoplasm</keyword>
<keyword id="KW-0903">Direct protein sequencing</keyword>
<keyword id="KW-0225">Disease variant</keyword>
<keyword id="KW-0242">Dwarfism</keyword>
<keyword id="KW-0269">Exonuclease</keyword>
<keyword id="KW-0378">Hydrolase</keyword>
<keyword id="KW-0991">Intellectual disability</keyword>
<keyword id="KW-0460">Magnesium</keyword>
<keyword id="KW-0479">Metal-binding</keyword>
<keyword id="KW-0540">Nuclease</keyword>
<keyword id="KW-0539">Nucleus</keyword>
<keyword id="KW-0597">Phosphoprotein</keyword>
<keyword id="KW-1267">Proteomics identification</keyword>
<keyword id="KW-1185">Reference proteome</keyword>
<keyword id="KW-0694">RNA-binding</keyword>
<keyword id="KW-0943">RNA-mediated gene silencing</keyword>
<keyword id="KW-0698">rRNA processing</keyword>
<name>ERI1_HUMAN</name>
<gene>
    <name evidence="16" type="primary">ERI1</name>
    <name type="synonym">3'EXO</name>
    <name type="synonym">THEX1</name>
</gene>
<accession>Q8IV48</accession>
<accession>A8K4U7</accession>
<accession>Q9NSX3</accession>
<reference key="1">
    <citation type="journal article" date="2003" name="Mol. Cell">
        <title>A 3' exonuclease that specifically interacts with the 3' end of histone mRNA.</title>
        <authorList>
            <person name="Dominski Z."/>
            <person name="Yang X.-C."/>
            <person name="Kaygun H."/>
            <person name="Dadlez M."/>
            <person name="Marzluff W.F."/>
        </authorList>
    </citation>
    <scope>NUCLEOTIDE SEQUENCE [MRNA]</scope>
    <scope>PROTEIN SEQUENCE OF 2-23; 43-48; 53-67; 161-172; 200-208; 225-237; 263-269 AND 284-291</scope>
    <scope>FUNCTION</scope>
    <scope>ACTIVITY REGULATION</scope>
    <scope>CATALYTIC ACTIVITY</scope>
    <scope>RNA-BINDING</scope>
</reference>
<reference key="2">
    <citation type="journal article" date="2004" name="Nat. Genet.">
        <title>Complete sequencing and characterization of 21,243 full-length human cDNAs.</title>
        <authorList>
            <person name="Ota T."/>
            <person name="Suzuki Y."/>
            <person name="Nishikawa T."/>
            <person name="Otsuki T."/>
            <person name="Sugiyama T."/>
            <person name="Irie R."/>
            <person name="Wakamatsu A."/>
            <person name="Hayashi K."/>
            <person name="Sato H."/>
            <person name="Nagai K."/>
            <person name="Kimura K."/>
            <person name="Makita H."/>
            <person name="Sekine M."/>
            <person name="Obayashi M."/>
            <person name="Nishi T."/>
            <person name="Shibahara T."/>
            <person name="Tanaka T."/>
            <person name="Ishii S."/>
            <person name="Yamamoto J."/>
            <person name="Saito K."/>
            <person name="Kawai Y."/>
            <person name="Isono Y."/>
            <person name="Nakamura Y."/>
            <person name="Nagahari K."/>
            <person name="Murakami K."/>
            <person name="Yasuda T."/>
            <person name="Iwayanagi T."/>
            <person name="Wagatsuma M."/>
            <person name="Shiratori A."/>
            <person name="Sudo H."/>
            <person name="Hosoiri T."/>
            <person name="Kaku Y."/>
            <person name="Kodaira H."/>
            <person name="Kondo H."/>
            <person name="Sugawara M."/>
            <person name="Takahashi M."/>
            <person name="Kanda K."/>
            <person name="Yokoi T."/>
            <person name="Furuya T."/>
            <person name="Kikkawa E."/>
            <person name="Omura Y."/>
            <person name="Abe K."/>
            <person name="Kamihara K."/>
            <person name="Katsuta N."/>
            <person name="Sato K."/>
            <person name="Tanikawa M."/>
            <person name="Yamazaki M."/>
            <person name="Ninomiya K."/>
            <person name="Ishibashi T."/>
            <person name="Yamashita H."/>
            <person name="Murakawa K."/>
            <person name="Fujimori K."/>
            <person name="Tanai H."/>
            <person name="Kimata M."/>
            <person name="Watanabe M."/>
            <person name="Hiraoka S."/>
            <person name="Chiba Y."/>
            <person name="Ishida S."/>
            <person name="Ono Y."/>
            <person name="Takiguchi S."/>
            <person name="Watanabe S."/>
            <person name="Yosida M."/>
            <person name="Hotuta T."/>
            <person name="Kusano J."/>
            <person name="Kanehori K."/>
            <person name="Takahashi-Fujii A."/>
            <person name="Hara H."/>
            <person name="Tanase T.-O."/>
            <person name="Nomura Y."/>
            <person name="Togiya S."/>
            <person name="Komai F."/>
            <person name="Hara R."/>
            <person name="Takeuchi K."/>
            <person name="Arita M."/>
            <person name="Imose N."/>
            <person name="Musashino K."/>
            <person name="Yuuki H."/>
            <person name="Oshima A."/>
            <person name="Sasaki N."/>
            <person name="Aotsuka S."/>
            <person name="Yoshikawa Y."/>
            <person name="Matsunawa H."/>
            <person name="Ichihara T."/>
            <person name="Shiohata N."/>
            <person name="Sano S."/>
            <person name="Moriya S."/>
            <person name="Momiyama H."/>
            <person name="Satoh N."/>
            <person name="Takami S."/>
            <person name="Terashima Y."/>
            <person name="Suzuki O."/>
            <person name="Nakagawa S."/>
            <person name="Senoh A."/>
            <person name="Mizoguchi H."/>
            <person name="Goto Y."/>
            <person name="Shimizu F."/>
            <person name="Wakebe H."/>
            <person name="Hishigaki H."/>
            <person name="Watanabe T."/>
            <person name="Sugiyama A."/>
            <person name="Takemoto M."/>
            <person name="Kawakami B."/>
            <person name="Yamazaki M."/>
            <person name="Watanabe K."/>
            <person name="Kumagai A."/>
            <person name="Itakura S."/>
            <person name="Fukuzumi Y."/>
            <person name="Fujimori Y."/>
            <person name="Komiyama M."/>
            <person name="Tashiro H."/>
            <person name="Tanigami A."/>
            <person name="Fujiwara T."/>
            <person name="Ono T."/>
            <person name="Yamada K."/>
            <person name="Fujii Y."/>
            <person name="Ozaki K."/>
            <person name="Hirao M."/>
            <person name="Ohmori Y."/>
            <person name="Kawabata A."/>
            <person name="Hikiji T."/>
            <person name="Kobatake N."/>
            <person name="Inagaki H."/>
            <person name="Ikema Y."/>
            <person name="Okamoto S."/>
            <person name="Okitani R."/>
            <person name="Kawakami T."/>
            <person name="Noguchi S."/>
            <person name="Itoh T."/>
            <person name="Shigeta K."/>
            <person name="Senba T."/>
            <person name="Matsumura K."/>
            <person name="Nakajima Y."/>
            <person name="Mizuno T."/>
            <person name="Morinaga M."/>
            <person name="Sasaki M."/>
            <person name="Togashi T."/>
            <person name="Oyama M."/>
            <person name="Hata H."/>
            <person name="Watanabe M."/>
            <person name="Komatsu T."/>
            <person name="Mizushima-Sugano J."/>
            <person name="Satoh T."/>
            <person name="Shirai Y."/>
            <person name="Takahashi Y."/>
            <person name="Nakagawa K."/>
            <person name="Okumura K."/>
            <person name="Nagase T."/>
            <person name="Nomura N."/>
            <person name="Kikuchi H."/>
            <person name="Masuho Y."/>
            <person name="Yamashita R."/>
            <person name="Nakai K."/>
            <person name="Yada T."/>
            <person name="Nakamura Y."/>
            <person name="Ohara O."/>
            <person name="Isogai T."/>
            <person name="Sugano S."/>
        </authorList>
    </citation>
    <scope>NUCLEOTIDE SEQUENCE [LARGE SCALE MRNA]</scope>
    <scope>VARIANT PRO-16</scope>
</reference>
<reference key="3">
    <citation type="journal article" date="2007" name="BMC Genomics">
        <title>The full-ORF clone resource of the German cDNA consortium.</title>
        <authorList>
            <person name="Bechtel S."/>
            <person name="Rosenfelder H."/>
            <person name="Duda A."/>
            <person name="Schmidt C.P."/>
            <person name="Ernst U."/>
            <person name="Wellenreuther R."/>
            <person name="Mehrle A."/>
            <person name="Schuster C."/>
            <person name="Bahr A."/>
            <person name="Bloecker H."/>
            <person name="Heubner D."/>
            <person name="Hoerlein A."/>
            <person name="Michel G."/>
            <person name="Wedler H."/>
            <person name="Koehrer K."/>
            <person name="Ottenwaelder B."/>
            <person name="Poustka A."/>
            <person name="Wiemann S."/>
            <person name="Schupp I."/>
        </authorList>
    </citation>
    <scope>NUCLEOTIDE SEQUENCE [LARGE SCALE MRNA]</scope>
    <source>
        <tissue>Testis</tissue>
    </source>
</reference>
<reference key="4">
    <citation type="journal article" date="2004" name="Genome Res.">
        <title>The status, quality, and expansion of the NIH full-length cDNA project: the Mammalian Gene Collection (MGC).</title>
        <authorList>
            <consortium name="The MGC Project Team"/>
        </authorList>
    </citation>
    <scope>NUCLEOTIDE SEQUENCE [LARGE SCALE MRNA]</scope>
</reference>
<reference key="5">
    <citation type="journal article" date="2004" name="Nature">
        <title>A conserved siRNA-degrading RNase negatively regulates RNA interference in C. elegans.</title>
        <authorList>
            <person name="Kennedy S."/>
            <person name="Wang D."/>
            <person name="Ruvkun G."/>
        </authorList>
    </citation>
    <scope>FUNCTION</scope>
</reference>
<reference key="6">
    <citation type="journal article" date="2006" name="J. Biol. Chem.">
        <title>Characterization of 3'hExo, a 3' exonuclease specifically interacting with the 3' end of histone mRNA.</title>
        <authorList>
            <person name="Yang X.-C."/>
            <person name="Purdy M."/>
            <person name="Marzluff W.F."/>
            <person name="Dominski Z."/>
        </authorList>
    </citation>
    <scope>FUNCTION</scope>
    <scope>IDENTIFICATION IN A TERNARY COMPLEX</scope>
    <scope>CATALYTIC ACTIVITY</scope>
    <scope>SUBCELLULAR LOCATION</scope>
    <scope>MUTAGENESIS OF LYS-92; ARG-96; LYS-99; LYS-104; ARG-105; TYR-109; TYR-110; LYS-111; LYS-112; ASP-234 AND MET-235</scope>
    <scope>RNA-BINDING</scope>
    <scope>CHARACTERIZATION OF VARIANT SEMDGC ALA-298</scope>
</reference>
<reference evidence="14" key="7">
    <citation type="journal article" date="2006" name="RNA">
        <title>Genetic and biochemical characterization of Drosophila Snipper: A promiscuous member of the metazoan 3'hExo/ERI-1 family of 3' to 5' exonucleases.</title>
        <authorList>
            <person name="Kupsco J.M."/>
            <person name="Wu M.J."/>
            <person name="Marzluff W.F."/>
            <person name="Thapar R."/>
            <person name="Duronio R.J."/>
        </authorList>
    </citation>
    <scope>FUNCTION</scope>
    <scope>CATALYTIC ACTIVITY</scope>
    <scope>COFACTOR</scope>
    <scope>ACTIVITY REGULATION</scope>
    <scope>BIOPHYSICOCHEMICAL PROPERTIES</scope>
</reference>
<reference key="8">
    <citation type="journal article" date="2009" name="Sci. Signal.">
        <title>Quantitative phosphoproteomic analysis of T cell receptor signaling reveals system-wide modulation of protein-protein interactions.</title>
        <authorList>
            <person name="Mayya V."/>
            <person name="Lundgren D.H."/>
            <person name="Hwang S.-I."/>
            <person name="Rezaul K."/>
            <person name="Wu L."/>
            <person name="Eng J.K."/>
            <person name="Rodionov V."/>
            <person name="Han D.K."/>
        </authorList>
    </citation>
    <scope>PHOSPHORYLATION [LARGE SCALE ANALYSIS] AT SER-62</scope>
    <scope>IDENTIFICATION BY MASS SPECTROMETRY [LARGE SCALE ANALYSIS]</scope>
    <source>
        <tissue>Leukemic T-cell</tissue>
    </source>
</reference>
<reference key="9">
    <citation type="journal article" date="2011" name="BMC Syst. Biol.">
        <title>Initial characterization of the human central proteome.</title>
        <authorList>
            <person name="Burkard T.R."/>
            <person name="Planyavsky M."/>
            <person name="Kaupe I."/>
            <person name="Breitwieser F.P."/>
            <person name="Buerckstuemmer T."/>
            <person name="Bennett K.L."/>
            <person name="Superti-Furga G."/>
            <person name="Colinge J."/>
        </authorList>
    </citation>
    <scope>IDENTIFICATION BY MASS SPECTROMETRY [LARGE SCALE ANALYSIS]</scope>
</reference>
<reference key="10">
    <citation type="journal article" date="2013" name="J. Proteome Res.">
        <title>Toward a comprehensive characterization of a human cancer cell phosphoproteome.</title>
        <authorList>
            <person name="Zhou H."/>
            <person name="Di Palma S."/>
            <person name="Preisinger C."/>
            <person name="Peng M."/>
            <person name="Polat A.N."/>
            <person name="Heck A.J."/>
            <person name="Mohammed S."/>
        </authorList>
    </citation>
    <scope>PHOSPHORYLATION [LARGE SCALE ANALYSIS] AT SER-59 AND SER-62</scope>
    <scope>IDENTIFICATION BY MASS SPECTROMETRY [LARGE SCALE ANALYSIS]</scope>
    <source>
        <tissue>Cervix carcinoma</tissue>
        <tissue>Erythroleukemia</tissue>
    </source>
</reference>
<reference evidence="17" key="11">
    <citation type="journal article" date="2004" name="J. Mol. Biol.">
        <title>Crystallographic structure of the nuclease domain of 3'hExo, a DEDDh family member, bound to rAMP.</title>
        <authorList>
            <person name="Cheng Y."/>
            <person name="Patel D.J."/>
        </authorList>
    </citation>
    <scope>X-RAY CRYSTALLOGRAPHY (1.6 ANGSTROMS) OF 123-322 IN COMPLEX WITH MAGNESIUM IONS AND AMP</scope>
    <scope>COFACTOR</scope>
</reference>
<reference key="12">
    <citation type="journal article" date="2023" name="Am. J. Med. Genet. A">
        <title>ERI1: A case report of an autosomal recessive syndrome associated with developmental delay and distal limb abnormalities.</title>
        <authorList>
            <person name="Hoxha V."/>
            <person name="Aliu E."/>
        </authorList>
    </citation>
    <scope>VARIANT HXAL 118-LYS--LYS-349 DEL</scope>
    <scope>INVOLVEMENT IN HXAL</scope>
</reference>
<reference key="13">
    <citation type="journal article" date="2023" name="Am. J. Hum. Genet.">
        <title>Null and missense mutations of ERI1 cause a recessive phenotypic dichotomy in humans.</title>
        <authorList>
            <person name="Guo L."/>
            <person name="Salian S."/>
            <person name="Xue J.Y."/>
            <person name="Rath N."/>
            <person name="Rousseau J."/>
            <person name="Kim H."/>
            <person name="Ehresmann S."/>
            <person name="Moosa S."/>
            <person name="Nakagawa N."/>
            <person name="Kuroda H."/>
            <person name="Clayton-Smith J."/>
            <person name="Wang J."/>
            <person name="Wang Z."/>
            <person name="Banka S."/>
            <person name="Jackson A."/>
            <person name="Zhang Y.M."/>
            <person name="Wei Z.J."/>
            <person name="Huening I."/>
            <person name="Brunet T."/>
            <person name="Ohashi H."/>
            <person name="Thomas M.F."/>
            <person name="Bupp C."/>
            <person name="Miyake N."/>
            <person name="Matsumoto N."/>
            <person name="Mendoza-Londono R."/>
            <person name="Costain G."/>
            <person name="Hahn G."/>
            <person name="Di Donato N."/>
            <person name="Yigit G."/>
            <person name="Yamada T."/>
            <person name="Nishimura G."/>
            <person name="Ansel K.M."/>
            <person name="Wollnik B."/>
            <person name="Hrabe de Angelis M."/>
            <person name="Megarbane A."/>
            <person name="Rosenfeld J.A."/>
            <person name="Heissmeyer V."/>
            <person name="Ikegawa S."/>
            <person name="Campeau P.M."/>
        </authorList>
    </citation>
    <scope>VARIANTS SEMDGC 21-SER--LYS-349 DEL; GLY-134; ASP-150; LEU-155; GLY-298; ALA-298 AND PRO-299</scope>
    <scope>CHARACTERIZATION OF VARIANTS SEMDGC GLY-134; ASP-150; LEU-155; GLY-298 AND PRO-299</scope>
    <scope>VARIANTS HXAL 172-GLN--LYS-349 DEL AND 244-GLN--LYS-349 DEL</scope>
    <scope>FUNCTION</scope>
</reference>
<evidence type="ECO:0000250" key="1"/>
<evidence type="ECO:0000250" key="2">
    <source>
        <dbReference type="UniProtKB" id="Q7TMF2"/>
    </source>
</evidence>
<evidence type="ECO:0000255" key="3">
    <source>
        <dbReference type="PROSITE-ProRule" id="PRU00186"/>
    </source>
</evidence>
<evidence type="ECO:0000256" key="4">
    <source>
        <dbReference type="SAM" id="MobiDB-lite"/>
    </source>
</evidence>
<evidence type="ECO:0000269" key="5">
    <source>
    </source>
</evidence>
<evidence type="ECO:0000269" key="6">
    <source>
    </source>
</evidence>
<evidence type="ECO:0000269" key="7">
    <source>
    </source>
</evidence>
<evidence type="ECO:0000269" key="8">
    <source>
    </source>
</evidence>
<evidence type="ECO:0000269" key="9">
    <source>
    </source>
</evidence>
<evidence type="ECO:0000269" key="10">
    <source>
    </source>
</evidence>
<evidence type="ECO:0000269" key="11">
    <source>
    </source>
</evidence>
<evidence type="ECO:0000269" key="12">
    <source>
    </source>
</evidence>
<evidence type="ECO:0000303" key="13">
    <source>
    </source>
</evidence>
<evidence type="ECO:0000305" key="14"/>
<evidence type="ECO:0000305" key="15">
    <source>
    </source>
</evidence>
<evidence type="ECO:0000312" key="16">
    <source>
        <dbReference type="HGNC" id="HGNC:23994"/>
    </source>
</evidence>
<evidence type="ECO:0007744" key="17">
    <source>
        <dbReference type="PDB" id="1W0H"/>
    </source>
</evidence>
<evidence type="ECO:0007744" key="18">
    <source>
    </source>
</evidence>
<evidence type="ECO:0007744" key="19">
    <source>
    </source>
</evidence>
<evidence type="ECO:0007829" key="20">
    <source>
        <dbReference type="PDB" id="1W0H"/>
    </source>
</evidence>
<evidence type="ECO:0007829" key="21">
    <source>
        <dbReference type="PDB" id="1ZBH"/>
    </source>
</evidence>
<evidence type="ECO:0007829" key="22">
    <source>
        <dbReference type="PDB" id="1ZBU"/>
    </source>
</evidence>
<evidence type="ECO:0007829" key="23">
    <source>
        <dbReference type="PDB" id="4QOZ"/>
    </source>
</evidence>
<feature type="initiator methionine" description="Removed" evidence="15">
    <location>
        <position position="1"/>
    </location>
</feature>
<feature type="chain" id="PRO_0000187007" description="3'-5' exoribonuclease 1">
    <location>
        <begin position="2"/>
        <end position="349"/>
    </location>
</feature>
<feature type="domain" description="SAP" evidence="3">
    <location>
        <begin position="76"/>
        <end position="110"/>
    </location>
</feature>
<feature type="domain" description="Exonuclease">
    <location>
        <begin position="130"/>
        <end position="306"/>
    </location>
</feature>
<feature type="region of interest" description="Disordered" evidence="4">
    <location>
        <begin position="1"/>
        <end position="48"/>
    </location>
</feature>
<feature type="compositionally biased region" description="Basic and acidic residues" evidence="4">
    <location>
        <begin position="1"/>
        <end position="10"/>
    </location>
</feature>
<feature type="compositionally biased region" description="Basic and acidic residues" evidence="4">
    <location>
        <begin position="22"/>
        <end position="35"/>
    </location>
</feature>
<feature type="active site" description="Proton acceptor" evidence="8 17">
    <location>
        <position position="136"/>
    </location>
</feature>
<feature type="active site" description="Proton acceptor" evidence="8 17">
    <location>
        <position position="293"/>
    </location>
</feature>
<feature type="binding site" evidence="8 17">
    <location>
        <position position="134"/>
    </location>
    <ligand>
        <name>Mg(2+)</name>
        <dbReference type="ChEBI" id="CHEBI:18420"/>
        <label>1</label>
    </ligand>
</feature>
<feature type="binding site" evidence="8 17">
    <location>
        <position position="134"/>
    </location>
    <ligand>
        <name>Mg(2+)</name>
        <dbReference type="ChEBI" id="CHEBI:18420"/>
        <label>2</label>
    </ligand>
</feature>
<feature type="binding site" evidence="8 17">
    <location>
        <position position="136"/>
    </location>
    <ligand>
        <name>AMP</name>
        <dbReference type="ChEBI" id="CHEBI:456215"/>
    </ligand>
</feature>
<feature type="binding site" evidence="8 17">
    <location>
        <position position="136"/>
    </location>
    <ligand>
        <name>Mg(2+)</name>
        <dbReference type="ChEBI" id="CHEBI:18420"/>
        <label>1</label>
    </ligand>
</feature>
<feature type="binding site" evidence="8 17">
    <location>
        <position position="137"/>
    </location>
    <ligand>
        <name>AMP</name>
        <dbReference type="ChEBI" id="CHEBI:456215"/>
    </ligand>
</feature>
<feature type="binding site" evidence="8 17">
    <location>
        <position position="234"/>
    </location>
    <ligand>
        <name>Mg(2+)</name>
        <dbReference type="ChEBI" id="CHEBI:18420"/>
        <label>2</label>
    </ligand>
</feature>
<feature type="binding site" evidence="8 17">
    <location>
        <position position="293"/>
    </location>
    <ligand>
        <name>AMP</name>
        <dbReference type="ChEBI" id="CHEBI:456215"/>
    </ligand>
</feature>
<feature type="binding site" evidence="8 17">
    <location>
        <position position="298"/>
    </location>
    <ligand>
        <name>Mg(2+)</name>
        <dbReference type="ChEBI" id="CHEBI:18420"/>
        <label>1</label>
    </ligand>
</feature>
<feature type="modified residue" description="Phosphoserine" evidence="19">
    <location>
        <position position="59"/>
    </location>
</feature>
<feature type="modified residue" description="Phosphoserine" evidence="18 19">
    <location>
        <position position="62"/>
    </location>
</feature>
<feature type="sequence variant" id="VAR_018107" description="In dbSNP:rs2288672." evidence="6">
    <original>L</original>
    <variation>P</variation>
    <location>
        <position position="16"/>
    </location>
</feature>
<feature type="sequence variant" id="VAR_089168" description="In SEMDGC; likely pathogenic." evidence="12">
    <location>
        <begin position="21"/>
        <end position="349"/>
    </location>
</feature>
<feature type="sequence variant" id="VAR_089169" description="In HXAL; likely pathogenic." evidence="11">
    <location>
        <begin position="118"/>
        <end position="349"/>
    </location>
</feature>
<feature type="sequence variant" id="VAR_089170" description="In SEMDGC; likely pathogenic; loss-of-function variant unable to rescue defective maturation of 5.8S rRNA in ERI1-deficient cells." evidence="12">
    <original>D</original>
    <variation>G</variation>
    <location>
        <position position="134"/>
    </location>
</feature>
<feature type="sequence variant" id="VAR_089171" description="In SEMDGC; likely pathogenic; loss-of-function variant unable to rescue defective maturation of 5.8S rRNA in ERI1-deficient cells." evidence="12">
    <original>E</original>
    <variation>D</variation>
    <location>
        <position position="150"/>
    </location>
</feature>
<feature type="sequence variant" id="VAR_089172" description="In SEMDGC; likely pathogenic; loss-of-function variant unable to rescue defective maturation of 5.8S rRNA in ERI1-deficient cells." evidence="12">
    <original>P</original>
    <variation>L</variation>
    <location>
        <position position="155"/>
    </location>
</feature>
<feature type="sequence variant" id="VAR_089173" description="In HXAL; likely pathogenic." evidence="12">
    <location>
        <begin position="172"/>
        <end position="349"/>
    </location>
</feature>
<feature type="sequence variant" id="VAR_089174" description="In HXAL; likely pathogenic." evidence="12">
    <location>
        <begin position="244"/>
        <end position="349"/>
    </location>
</feature>
<feature type="sequence variant" id="VAR_089175" description="In SEMDGC; likely pathogenic; inhibits 3'-end histone mRNA exonuclease activity." evidence="9 12">
    <original>D</original>
    <variation>A</variation>
    <location>
        <position position="298"/>
    </location>
</feature>
<feature type="sequence variant" id="VAR_089176" description="In SEMDGC; likely pathogenic; loss-of-function variant unable to rescue defective maturation of 5.8S rRNA in ERI1-deficient cells." evidence="12">
    <original>D</original>
    <variation>G</variation>
    <location>
        <position position="298"/>
    </location>
</feature>
<feature type="sequence variant" id="VAR_089177" description="In SEMDGC; likely pathogenic; loss-of-function variant unable to rescue defective maturation of 5.8S rRNA in ERI1-deficient cells." evidence="12">
    <original>S</original>
    <variation>P</variation>
    <location>
        <position position="299"/>
    </location>
</feature>
<feature type="mutagenesis site" description="Does not inhibit RNA-binding to the stem-loop structure. Does not inhibit RNA-binding to the stem-loop structure, when associated with A-104." evidence="9">
    <original>K</original>
    <variation>A</variation>
    <location>
        <position position="92"/>
    </location>
</feature>
<feature type="mutagenesis site" description="Does not inhibit RNA-binding to the stem-loop structure." evidence="9">
    <original>R</original>
    <variation>A</variation>
    <location>
        <position position="96"/>
    </location>
</feature>
<feature type="mutagenesis site" description="Reduces slightly RNA-binding to the stem-loop structure." evidence="9">
    <original>K</original>
    <variation>A</variation>
    <location>
        <position position="99"/>
    </location>
</feature>
<feature type="mutagenesis site" description="Does not inhibit RNA-binding to the stem-loop structure. Does not inhibit RNA-binding to the stem-loop structure, when associated with A-92." evidence="9">
    <original>K</original>
    <variation>A</variation>
    <location>
        <position position="104"/>
    </location>
</feature>
<feature type="mutagenesis site" description="Inhibits RNA-binding to the stem-loop structure." evidence="9">
    <original>R</original>
    <variation>A</variation>
    <location>
        <position position="105"/>
    </location>
</feature>
<feature type="mutagenesis site" description="Reduces slightly RNA-binding to the stem-loop structure; when associated with A-110." evidence="9">
    <original>Y</original>
    <variation>A</variation>
    <location>
        <position position="109"/>
    </location>
</feature>
<feature type="mutagenesis site" description="Reduces slightly RNA-binding to the stem-loop structure; when associated with A-109." evidence="9">
    <original>Y</original>
    <variation>A</variation>
    <location>
        <position position="110"/>
    </location>
</feature>
<feature type="mutagenesis site" description="Reduces RNA-binding to the stem-loop structure but not 3'-end histone mRNA exonuclease activity; when associated with A-112." evidence="9">
    <original>K</original>
    <variation>A</variation>
    <location>
        <position position="111"/>
    </location>
</feature>
<feature type="mutagenesis site" description="Reduces RNA-binding to the stem-loop structure but not 3'-end histone mRNA exonuclease activity; when associated with A-111." evidence="9">
    <original>K</original>
    <variation>A</variation>
    <location>
        <position position="112"/>
    </location>
</feature>
<feature type="mutagenesis site" description="Inhibits 3'-end histone mRNA exonuclease activity." evidence="9">
    <original>D</original>
    <variation>A</variation>
    <location>
        <position position="234"/>
    </location>
</feature>
<feature type="mutagenesis site" description="Inhibits RNA-binding to the stem-loop structure and 3'-end histone mRNA exonuclease activity." evidence="9">
    <original>M</original>
    <variation>A</variation>
    <location>
        <position position="235"/>
    </location>
</feature>
<feature type="helix" evidence="22">
    <location>
        <begin position="47"/>
        <end position="49"/>
    </location>
</feature>
<feature type="turn" evidence="22">
    <location>
        <begin position="50"/>
        <end position="52"/>
    </location>
</feature>
<feature type="strand" evidence="22">
    <location>
        <begin position="53"/>
        <end position="57"/>
    </location>
</feature>
<feature type="helix" evidence="23">
    <location>
        <begin position="64"/>
        <end position="77"/>
    </location>
</feature>
<feature type="helix" evidence="23">
    <location>
        <begin position="81"/>
        <end position="90"/>
    </location>
</feature>
<feature type="helix" evidence="23">
    <location>
        <begin position="99"/>
        <end position="114"/>
    </location>
</feature>
<feature type="strand" evidence="22">
    <location>
        <begin position="115"/>
        <end position="119"/>
    </location>
</feature>
<feature type="strand" evidence="20">
    <location>
        <begin position="126"/>
        <end position="132"/>
    </location>
</feature>
<feature type="strand" evidence="20">
    <location>
        <begin position="151"/>
        <end position="160"/>
    </location>
</feature>
<feature type="turn" evidence="20">
    <location>
        <begin position="161"/>
        <end position="163"/>
    </location>
</feature>
<feature type="strand" evidence="20">
    <location>
        <begin position="165"/>
        <end position="174"/>
    </location>
</feature>
<feature type="strand" evidence="20">
    <location>
        <begin position="177"/>
        <end position="179"/>
    </location>
</feature>
<feature type="helix" evidence="20">
    <location>
        <begin position="184"/>
        <end position="190"/>
    </location>
</feature>
<feature type="helix" evidence="20">
    <location>
        <begin position="194"/>
        <end position="198"/>
    </location>
</feature>
<feature type="strand" evidence="22">
    <location>
        <begin position="200"/>
        <end position="202"/>
    </location>
</feature>
<feature type="helix" evidence="20">
    <location>
        <begin position="203"/>
        <end position="216"/>
    </location>
</feature>
<feature type="turn" evidence="20">
    <location>
        <begin position="220"/>
        <end position="222"/>
    </location>
</feature>
<feature type="strand" evidence="20">
    <location>
        <begin position="225"/>
        <end position="231"/>
    </location>
</feature>
<feature type="turn" evidence="20">
    <location>
        <begin position="232"/>
        <end position="235"/>
    </location>
</feature>
<feature type="helix" evidence="20">
    <location>
        <begin position="236"/>
        <end position="246"/>
    </location>
</feature>
<feature type="helix" evidence="20">
    <location>
        <begin position="252"/>
        <end position="254"/>
    </location>
</feature>
<feature type="strand" evidence="20">
    <location>
        <begin position="255"/>
        <end position="259"/>
    </location>
</feature>
<feature type="helix" evidence="20">
    <location>
        <begin position="260"/>
        <end position="268"/>
    </location>
</feature>
<feature type="helix" evidence="20">
    <location>
        <begin position="272"/>
        <end position="274"/>
    </location>
</feature>
<feature type="helix" evidence="20">
    <location>
        <begin position="277"/>
        <end position="283"/>
    </location>
</feature>
<feature type="helix" evidence="20">
    <location>
        <begin position="295"/>
        <end position="311"/>
    </location>
</feature>
<feature type="strand" evidence="23">
    <location>
        <begin position="320"/>
        <end position="323"/>
    </location>
</feature>
<feature type="strand" evidence="23">
    <location>
        <begin position="326"/>
        <end position="329"/>
    </location>
</feature>
<feature type="strand" evidence="21">
    <location>
        <begin position="332"/>
        <end position="334"/>
    </location>
</feature>
<organism>
    <name type="scientific">Homo sapiens</name>
    <name type="common">Human</name>
    <dbReference type="NCBI Taxonomy" id="9606"/>
    <lineage>
        <taxon>Eukaryota</taxon>
        <taxon>Metazoa</taxon>
        <taxon>Chordata</taxon>
        <taxon>Craniata</taxon>
        <taxon>Vertebrata</taxon>
        <taxon>Euteleostomi</taxon>
        <taxon>Mammalia</taxon>
        <taxon>Eutheria</taxon>
        <taxon>Euarchontoglires</taxon>
        <taxon>Primates</taxon>
        <taxon>Haplorrhini</taxon>
        <taxon>Catarrhini</taxon>
        <taxon>Hominidae</taxon>
        <taxon>Homo</taxon>
    </lineage>
</organism>
<sequence>MEDPQSKEPAGEAVALALLESPRPEGGEEPPRPSPEETQQCKFDGQETKGSKFITSSASDFSDPVYKEIAITNGCINRMSKEELRAKLSEFKLETRGVKDVLKKRLKNYYKKQKLMLKESNFADSYYDYICIIDFEATCEEGNPPEFVHEIIEFPVVLLNTHTLEIEDTFQQYVRPEINTQLSDFCISLTGITQDQVDRADTFPQVLKKVIDWMKLKELGTKYKYSLLTDGSWDMSKFLNIQCQLSRLKYPPFAKKWINIRKSYGNFYKVPRSQTKLTIMLEKLGMDYDGRPHCGLDDSKNIARIAVRMLQDGCELRINEKMHAGQLMSVSSSLPIEGTPPPQMPHFRK</sequence>
<proteinExistence type="evidence at protein level"/>
<protein>
    <recommendedName>
        <fullName>3'-5' exoribonuclease 1</fullName>
        <ecNumber evidence="5 9 10">3.1.13.1</ecNumber>
    </recommendedName>
    <alternativeName>
        <fullName>3'-5' exonuclease ERI1</fullName>
    </alternativeName>
    <alternativeName>
        <fullName>Eri-1 homolog</fullName>
    </alternativeName>
    <alternativeName>
        <fullName>Histone mRNA 3'-end-specific exoribonuclease</fullName>
    </alternativeName>
    <alternativeName>
        <fullName>Histone mRNA 3'-exonuclease 1</fullName>
    </alternativeName>
    <alternativeName>
        <fullName evidence="13">Protein 3'hExo</fullName>
        <shortName>HEXO</shortName>
    </alternativeName>
</protein>
<comment type="function">
    <text evidence="2 5 7 9 10 12">RNA exonuclease that binds to the 3'-end of histone mRNAs and degrades them, suggesting that it plays an essential role in histone mRNA decay after replication (PubMed:14536070, PubMed:16912046, PubMed:17135487, PubMed:37352860). A 2' and 3'-hydroxyl groups at the last nucleotide of the histone 3'-end is required for efficient 3'-end histone mRNA exonuclease activity and degradation of RNA substrates (PubMed:14536070, PubMed:16912046, PubMed:17135487). Also able to degrade the 3'-overhangs of short interfering RNAs (siRNAs) in vitro, suggesting a possible role as regulator of RNA interference (RNAi) (PubMed:14961122). Required for binding the 5'-ACCCA-3' sequence present in stem-loop structure (PubMed:14536070, PubMed:16912046). Able to bind other mRNAs (PubMed:14536070, PubMed:16912046). Required for 5.8S rRNA 3'-end processing (PubMed:37352860). Also binds to 5.8s ribosomal RNA (By similarity). Binds with high affinity to the stem-loop structure of replication-dependent histone pre-mRNAs (PubMed:14536070, PubMed:16912046, PubMed:17135487). In vitro, does not have sequence specificity (PubMed:17135487). In vitro, has weak DNA exonuclease activity (PubMed:17135487). In vitro, shows biphasic kinetics such that there is rapid hydrolysis of the last three unpaired RNA nucleotides in the 39 flanking sequence followed by a much slower cleavage through the stem that occurs over a longer incubation period in the order of hours (PubMed:17135487). ERI1-mediated RNA metabolism plays a key role in chondrogenesis (PubMed:37352860).</text>
</comment>
<comment type="catalytic activity">
    <reaction evidence="5 9 10">
        <text>Exonucleolytic cleavage in the 3'- to 5'-direction to yield nucleoside 5'-phosphates.</text>
        <dbReference type="EC" id="3.1.13.1"/>
    </reaction>
</comment>
<comment type="cofactor">
    <cofactor evidence="8 10">
        <name>Mg(2+)</name>
        <dbReference type="ChEBI" id="CHEBI:18420"/>
    </cofactor>
    <text evidence="8">Binds 2 magnesium ions per subunit.</text>
</comment>
<comment type="activity regulation">
    <text evidence="5">Although it can bind simultaneously with SLBP to the 3'-end of histone mRNA, the presence of SLBP prevents the exonuclease activity.</text>
</comment>
<comment type="biophysicochemical properties">
    <temperatureDependence>
        <text evidence="10">Optimum temperature is 37 degrees Celsius.</text>
    </temperatureDependence>
</comment>
<comment type="subunit">
    <text evidence="1 8 9">Identified in a histone pre-mRNA complex, at least composed of ERI1, LSM11, SLBP, SNRPB, SYNCRIP and YBX1. Interacts in a cooperative manner with SLBP to the mature 3'-end of histone mRNAs (By similarity). Binds to 40S and 60S ribosomal subunits and to 80S assembled ribosomes. Found in a ternary complex with SLBP and the stem-loop structure of the 3'-end of histone mRNAs.</text>
</comment>
<comment type="interaction">
    <interactant intactId="EBI-5459222">
        <id>Q8IV48</id>
    </interactant>
    <interactant intactId="EBI-373498">
        <id>A9UHW6</id>
        <label>MIF4GD</label>
    </interactant>
    <organismsDiffer>false</organismsDiffer>
    <experiments>2</experiments>
</comment>
<comment type="interaction">
    <interactant intactId="EBI-5459222">
        <id>Q8IV48</id>
    </interactant>
    <interactant intactId="EBI-2696402">
        <id>Q14493</id>
        <label>SLBP</label>
    </interactant>
    <organismsDiffer>false</organismsDiffer>
    <experiments>2</experiments>
</comment>
<comment type="subcellular location">
    <subcellularLocation>
        <location evidence="9">Cytoplasm</location>
    </subcellularLocation>
    <subcellularLocation>
        <location evidence="9">Nucleus</location>
    </subcellularLocation>
    <subcellularLocation>
        <location evidence="9">Nucleus</location>
        <location evidence="9">Nucleolus</location>
    </subcellularLocation>
</comment>
<comment type="domain">
    <text>The SAP domain is necessary for binding to the stem-loop structure of histone mRNAs and to form the ternary complex with SLBP, but not for 3'-end histone mRNA exonuclease activity.</text>
</comment>
<comment type="disease" evidence="11 12">
    <disease id="DI-06816">
        <name>Hoxha-Aliu syndrome</name>
        <acronym>HXAL</acronym>
        <description>An autosomal recessive disorder characterized by mild intellectual disability, eyelid ptosis, and limb anomalies including brachydactyly, clinodactyly, dysplastic or absent nails, brachytelephalangy, short metacarpals, and toe syndactyly.</description>
        <dbReference type="MIM" id="620662"/>
    </disease>
    <text>The disease is caused by variants affecting the gene represented in this entry.</text>
</comment>
<comment type="disease" evidence="9 12">
    <disease id="DI-06817">
        <name>Spondyloepimetaphyseal dysplasia, Guo-Campeau type</name>
        <acronym>SEMDGC</acronym>
        <description>An autosomal recessive, severe bone disease characterized by short stature, scoliosis, platyspondyly, irregular vertebral plates, facial dysmorphism, and variable anomalies of the pelvis, hips, and extremities including short, rudimentary, or absent digits.</description>
        <dbReference type="MIM" id="620663"/>
    </disease>
    <text>The disease is caused by variants affecting the gene represented in this entry.</text>
</comment>
<comment type="sequence caution" evidence="14">
    <conflict type="erroneous termination">
        <sequence resource="EMBL-CDS" id="CAB70871"/>
    </conflict>
    <text>Truncated C-terminus.</text>
</comment>
<comment type="sequence caution" evidence="14">
    <conflict type="frameshift">
        <sequence resource="EMBL-CDS" id="CAB70871"/>
    </conflict>
</comment>